<protein>
    <recommendedName>
        <fullName>Probable phospholipid-transporting ATPase IIB</fullName>
        <ecNumber>7.6.2.1</ecNumber>
    </recommendedName>
    <alternativeName>
        <fullName>ATPase class II type 9B</fullName>
    </alternativeName>
</protein>
<reference key="1">
    <citation type="submission" date="2006-10" db="EMBL/GenBank/DDBJ databases">
        <authorList>
            <consortium name="NIH - Mammalian Gene Collection (MGC) project"/>
        </authorList>
    </citation>
    <scope>NUCLEOTIDE SEQUENCE [LARGE SCALE MRNA]</scope>
    <source>
        <strain>Hereford</strain>
        <tissue>Hippocampus</tissue>
    </source>
</reference>
<sequence length="1136" mass="127457">MADQIPLYPVRSAAAVAAANRKRAAYFSSAGPGPGADRPSRYQLEDESAHLDEMPLMMSEEGFENDESDYHTLPRARITRRKRGLEWFVCGGWKFLCTSCCDWLINICQRKRELKARTVWLGCPEKCEEKHPRNSIKNQKYNIFTFIPGVLYEQFKFFLNLYFLIVSCSQFVPALKIGYLYTYWAPLGFVLAVTIMREAVDEFRRFQRDKEVNSQLYSKLTVRGKVQVKSSDIQVGDLIIVEKNQRIPSDMVFLRTSEKAGSCFIRTDQLDGETDWKLKVAVSCTQRLPALGDLFSINAYVYAQKPQLDIHSFEGTFTREDSDPPVHESLSIENTLWASTVVASGTVIGVVIYTGKETRSVMNTSNPKNKVGLLDLELNQLTKALFLALVALSVVMVTLQGFAGPWYRSLFRFLLLFSYIIPISLRVNLDMGKAAYGWMIMRDEHIPGTVVRTSTIPEELGRLVYLLTDKTGTLTQNEMVFKRLHLGTVSYGTDTMDEIQNHLVNAYTQTQCQAGGSSAASTPPRKAPSSAPKVRRSVSSRVHEAVKAVALCHNVTPVYEARGAAGETEVAEADQDFSDDNRTYQASSPDEVALVQWTESVGLTLVSRDLTSMQLRTPGGQILTYCILQTFPFTSESKRMGVIVRDESTAEITFYMKGADVAMASIVQYNDWLEEECGNMAREGLRTLVVAKRALTEEQYQDFESRYNQAKLSLHDRTLKVAAVVESLEREMELLCLTGVEDQLQADVRPTLEMLRNAGIKIWMLTGDKLETATCIAKSSHLVSRTQDTHVFRPVTSRGEAHLELNAFRRKHDCALVISGDSLEVCLKYYEHEFVELACQCPAVVCCRCSPTQKAHIVKLLQQHTGRRTCAIGDGGNDVSMIQAADCGIGIEGKEGRQASLAADFSITRFKHVGRLLMVHGRSSYKRSAALGQFVMHRGLIISTMQAVFSSVFYFASVPLYQGFLMVGYATVYTMFPVFSLVLDQDVKPEMAMLYPELYKDLTKGRSLSFKTFLVWVLISIYQGGILMFGALVLFESEFVHVVAISFTALVLTELLMVALTVRTWHWLMVVAQLLSLGCYVASLAFLNEYFDVAFITTVTFVWKVSAITVVSCLPLYVLKYLKRKLSPPSYSKLSS</sequence>
<proteinExistence type="evidence at transcript level"/>
<dbReference type="EC" id="7.6.2.1"/>
<dbReference type="EMBL" id="BC126606">
    <property type="protein sequence ID" value="AAI26607.1"/>
    <property type="molecule type" value="mRNA"/>
</dbReference>
<dbReference type="RefSeq" id="NP_001073724.1">
    <property type="nucleotide sequence ID" value="NM_001080255.1"/>
</dbReference>
<dbReference type="SMR" id="A1A4J6"/>
<dbReference type="FunCoup" id="A1A4J6">
    <property type="interactions" value="4308"/>
</dbReference>
<dbReference type="STRING" id="9913.ENSBTAP00000010477"/>
<dbReference type="PaxDb" id="9913-ENSBTAP00000010477"/>
<dbReference type="Ensembl" id="ENSBTAT00000010477.6">
    <property type="protein sequence ID" value="ENSBTAP00000010477.4"/>
    <property type="gene ID" value="ENSBTAG00000001224.6"/>
</dbReference>
<dbReference type="GeneID" id="510301"/>
<dbReference type="KEGG" id="bta:510301"/>
<dbReference type="CTD" id="374868"/>
<dbReference type="VEuPathDB" id="HostDB:ENSBTAG00000001224"/>
<dbReference type="VGNC" id="VGNC:112652">
    <property type="gene designation" value="ATP9B"/>
</dbReference>
<dbReference type="eggNOG" id="KOG0210">
    <property type="taxonomic scope" value="Eukaryota"/>
</dbReference>
<dbReference type="GeneTree" id="ENSGT00940000157071"/>
<dbReference type="HOGENOM" id="CLU_000846_3_1_1"/>
<dbReference type="InParanoid" id="A1A4J6"/>
<dbReference type="OMA" id="IAITTWH"/>
<dbReference type="OrthoDB" id="377733at2759"/>
<dbReference type="TreeFam" id="TF300590"/>
<dbReference type="Reactome" id="R-BTA-936837">
    <property type="pathway name" value="Ion transport by P-type ATPases"/>
</dbReference>
<dbReference type="Proteomes" id="UP000009136">
    <property type="component" value="Chromosome 24"/>
</dbReference>
<dbReference type="Bgee" id="ENSBTAG00000001224">
    <property type="expression patterns" value="Expressed in spermatid and 105 other cell types or tissues"/>
</dbReference>
<dbReference type="GO" id="GO:0005768">
    <property type="term" value="C:endosome"/>
    <property type="evidence" value="ECO:0000318"/>
    <property type="project" value="GO_Central"/>
</dbReference>
<dbReference type="GO" id="GO:0048471">
    <property type="term" value="C:perinuclear region of cytoplasm"/>
    <property type="evidence" value="ECO:0007669"/>
    <property type="project" value="Ensembl"/>
</dbReference>
<dbReference type="GO" id="GO:0005886">
    <property type="term" value="C:plasma membrane"/>
    <property type="evidence" value="ECO:0000318"/>
    <property type="project" value="GO_Central"/>
</dbReference>
<dbReference type="GO" id="GO:0005802">
    <property type="term" value="C:trans-Golgi network"/>
    <property type="evidence" value="ECO:0000318"/>
    <property type="project" value="GO_Central"/>
</dbReference>
<dbReference type="GO" id="GO:0005524">
    <property type="term" value="F:ATP binding"/>
    <property type="evidence" value="ECO:0007669"/>
    <property type="project" value="UniProtKB-KW"/>
</dbReference>
<dbReference type="GO" id="GO:0016887">
    <property type="term" value="F:ATP hydrolysis activity"/>
    <property type="evidence" value="ECO:0007669"/>
    <property type="project" value="InterPro"/>
</dbReference>
<dbReference type="GO" id="GO:0140326">
    <property type="term" value="F:ATPase-coupled intramembrane lipid transporter activity"/>
    <property type="evidence" value="ECO:0000318"/>
    <property type="project" value="GO_Central"/>
</dbReference>
<dbReference type="GO" id="GO:0000287">
    <property type="term" value="F:magnesium ion binding"/>
    <property type="evidence" value="ECO:0007669"/>
    <property type="project" value="InterPro"/>
</dbReference>
<dbReference type="GO" id="GO:0006897">
    <property type="term" value="P:endocytosis"/>
    <property type="evidence" value="ECO:0000318"/>
    <property type="project" value="GO_Central"/>
</dbReference>
<dbReference type="GO" id="GO:0045332">
    <property type="term" value="P:phospholipid translocation"/>
    <property type="evidence" value="ECO:0000318"/>
    <property type="project" value="GO_Central"/>
</dbReference>
<dbReference type="GO" id="GO:0006890">
    <property type="term" value="P:retrograde vesicle-mediated transport, Golgi to endoplasmic reticulum"/>
    <property type="evidence" value="ECO:0000318"/>
    <property type="project" value="GO_Central"/>
</dbReference>
<dbReference type="CDD" id="cd07541">
    <property type="entry name" value="P-type_ATPase_APLT_Neo1-like"/>
    <property type="match status" value="1"/>
</dbReference>
<dbReference type="FunFam" id="3.40.1110.10:FF:000008">
    <property type="entry name" value="Phospholipid-transporting ATPase"/>
    <property type="match status" value="1"/>
</dbReference>
<dbReference type="FunFam" id="3.40.50.1000:FF:000009">
    <property type="entry name" value="Phospholipid-transporting ATPase"/>
    <property type="match status" value="1"/>
</dbReference>
<dbReference type="Gene3D" id="3.40.1110.10">
    <property type="entry name" value="Calcium-transporting ATPase, cytoplasmic domain N"/>
    <property type="match status" value="1"/>
</dbReference>
<dbReference type="Gene3D" id="2.70.150.10">
    <property type="entry name" value="Calcium-transporting ATPase, cytoplasmic transduction domain A"/>
    <property type="match status" value="1"/>
</dbReference>
<dbReference type="Gene3D" id="3.40.50.1000">
    <property type="entry name" value="HAD superfamily/HAD-like"/>
    <property type="match status" value="1"/>
</dbReference>
<dbReference type="InterPro" id="IPR023299">
    <property type="entry name" value="ATPase_P-typ_cyto_dom_N"/>
</dbReference>
<dbReference type="InterPro" id="IPR018303">
    <property type="entry name" value="ATPase_P-typ_P_site"/>
</dbReference>
<dbReference type="InterPro" id="IPR023298">
    <property type="entry name" value="ATPase_P-typ_TM_dom_sf"/>
</dbReference>
<dbReference type="InterPro" id="IPR008250">
    <property type="entry name" value="ATPase_P-typ_transduc_dom_A_sf"/>
</dbReference>
<dbReference type="InterPro" id="IPR036412">
    <property type="entry name" value="HAD-like_sf"/>
</dbReference>
<dbReference type="InterPro" id="IPR023214">
    <property type="entry name" value="HAD_sf"/>
</dbReference>
<dbReference type="InterPro" id="IPR006539">
    <property type="entry name" value="P-type_ATPase_IV"/>
</dbReference>
<dbReference type="InterPro" id="IPR032631">
    <property type="entry name" value="P-type_ATPase_N"/>
</dbReference>
<dbReference type="InterPro" id="IPR001757">
    <property type="entry name" value="P_typ_ATPase"/>
</dbReference>
<dbReference type="InterPro" id="IPR032630">
    <property type="entry name" value="P_typ_ATPase_c"/>
</dbReference>
<dbReference type="InterPro" id="IPR044492">
    <property type="entry name" value="P_typ_ATPase_HD_dom"/>
</dbReference>
<dbReference type="NCBIfam" id="TIGR01652">
    <property type="entry name" value="ATPase-Plipid"/>
    <property type="match status" value="1"/>
</dbReference>
<dbReference type="NCBIfam" id="TIGR01494">
    <property type="entry name" value="ATPase_P-type"/>
    <property type="match status" value="3"/>
</dbReference>
<dbReference type="PANTHER" id="PTHR24092:SF50">
    <property type="entry name" value="PHOSPHOLIPID-TRANSPORTING ATPASE IIB-RELATED"/>
    <property type="match status" value="1"/>
</dbReference>
<dbReference type="PANTHER" id="PTHR24092">
    <property type="entry name" value="PROBABLE PHOSPHOLIPID-TRANSPORTING ATPASE"/>
    <property type="match status" value="1"/>
</dbReference>
<dbReference type="Pfam" id="PF13246">
    <property type="entry name" value="Cation_ATPase"/>
    <property type="match status" value="1"/>
</dbReference>
<dbReference type="Pfam" id="PF00122">
    <property type="entry name" value="E1-E2_ATPase"/>
    <property type="match status" value="1"/>
</dbReference>
<dbReference type="Pfam" id="PF00702">
    <property type="entry name" value="Hydrolase"/>
    <property type="match status" value="1"/>
</dbReference>
<dbReference type="Pfam" id="PF16212">
    <property type="entry name" value="PhoLip_ATPase_C"/>
    <property type="match status" value="1"/>
</dbReference>
<dbReference type="Pfam" id="PF16209">
    <property type="entry name" value="PhoLip_ATPase_N"/>
    <property type="match status" value="1"/>
</dbReference>
<dbReference type="PRINTS" id="PR00119">
    <property type="entry name" value="CATATPASE"/>
</dbReference>
<dbReference type="SFLD" id="SFLDG00002">
    <property type="entry name" value="C1.7:_P-type_atpase_like"/>
    <property type="match status" value="1"/>
</dbReference>
<dbReference type="SFLD" id="SFLDF00027">
    <property type="entry name" value="p-type_atpase"/>
    <property type="match status" value="1"/>
</dbReference>
<dbReference type="SUPFAM" id="SSF81653">
    <property type="entry name" value="Calcium ATPase, transduction domain A"/>
    <property type="match status" value="1"/>
</dbReference>
<dbReference type="SUPFAM" id="SSF81665">
    <property type="entry name" value="Calcium ATPase, transmembrane domain M"/>
    <property type="match status" value="1"/>
</dbReference>
<dbReference type="SUPFAM" id="SSF56784">
    <property type="entry name" value="HAD-like"/>
    <property type="match status" value="1"/>
</dbReference>
<dbReference type="SUPFAM" id="SSF81660">
    <property type="entry name" value="Metal cation-transporting ATPase, ATP-binding domain N"/>
    <property type="match status" value="1"/>
</dbReference>
<dbReference type="PROSITE" id="PS00154">
    <property type="entry name" value="ATPASE_E1_E2"/>
    <property type="match status" value="1"/>
</dbReference>
<organism>
    <name type="scientific">Bos taurus</name>
    <name type="common">Bovine</name>
    <dbReference type="NCBI Taxonomy" id="9913"/>
    <lineage>
        <taxon>Eukaryota</taxon>
        <taxon>Metazoa</taxon>
        <taxon>Chordata</taxon>
        <taxon>Craniata</taxon>
        <taxon>Vertebrata</taxon>
        <taxon>Euteleostomi</taxon>
        <taxon>Mammalia</taxon>
        <taxon>Eutheria</taxon>
        <taxon>Laurasiatheria</taxon>
        <taxon>Artiodactyla</taxon>
        <taxon>Ruminantia</taxon>
        <taxon>Pecora</taxon>
        <taxon>Bovidae</taxon>
        <taxon>Bovinae</taxon>
        <taxon>Bos</taxon>
    </lineage>
</organism>
<accession>A1A4J6</accession>
<gene>
    <name type="primary">ATP9B</name>
</gene>
<comment type="catalytic activity">
    <reaction>
        <text>ATP + H2O + phospholipidSide 1 = ADP + phosphate + phospholipidSide 2.</text>
        <dbReference type="EC" id="7.6.2.1"/>
    </reaction>
</comment>
<comment type="cofactor">
    <cofactor evidence="4">
        <name>Mg(2+)</name>
        <dbReference type="ChEBI" id="CHEBI:18420"/>
    </cofactor>
</comment>
<comment type="subcellular location">
    <subcellularLocation>
        <location evidence="1">Golgi apparatus</location>
        <location evidence="1">trans-Golgi network membrane</location>
        <topology evidence="1">Multi-pass membrane protein</topology>
    </subcellularLocation>
</comment>
<comment type="similarity">
    <text evidence="9">Belongs to the cation transport ATPase (P-type) (TC 3.A.3) family. Type IV subfamily.</text>
</comment>
<comment type="caution">
    <text evidence="9">It is uncertain whether Met-1 or Met-54 is the initiator.</text>
</comment>
<name>ATP9B_BOVIN</name>
<feature type="chain" id="PRO_0000356354" description="Probable phospholipid-transporting ATPase IIB">
    <location>
        <begin position="1"/>
        <end position="1136"/>
    </location>
</feature>
<feature type="topological domain" description="Cytoplasmic" evidence="7">
    <location>
        <begin position="1"/>
        <end position="145"/>
    </location>
</feature>
<feature type="transmembrane region" description="Helical" evidence="7">
    <location>
        <begin position="146"/>
        <end position="166"/>
    </location>
</feature>
<feature type="topological domain" description="Extracellular" evidence="7">
    <location>
        <begin position="167"/>
        <end position="174"/>
    </location>
</feature>
<feature type="transmembrane region" description="Helical" evidence="7">
    <location>
        <begin position="175"/>
        <end position="195"/>
    </location>
</feature>
<feature type="topological domain" description="Cytoplasmic" evidence="7">
    <location>
        <begin position="196"/>
        <end position="383"/>
    </location>
</feature>
<feature type="transmembrane region" description="Helical" evidence="7">
    <location>
        <begin position="384"/>
        <end position="404"/>
    </location>
</feature>
<feature type="topological domain" description="Extracellular" evidence="7">
    <location>
        <begin position="405"/>
        <end position="408"/>
    </location>
</feature>
<feature type="transmembrane region" description="Helical" evidence="7">
    <location>
        <begin position="409"/>
        <end position="429"/>
    </location>
</feature>
<feature type="topological domain" description="Cytoplasmic" evidence="7">
    <location>
        <begin position="430"/>
        <end position="939"/>
    </location>
</feature>
<feature type="transmembrane region" description="Helical" evidence="7">
    <location>
        <begin position="940"/>
        <end position="960"/>
    </location>
</feature>
<feature type="topological domain" description="Extracellular" evidence="7">
    <location>
        <begin position="961"/>
        <end position="962"/>
    </location>
</feature>
<feature type="transmembrane region" description="Helical" evidence="7">
    <location>
        <begin position="963"/>
        <end position="983"/>
    </location>
</feature>
<feature type="topological domain" description="Cytoplasmic" evidence="7">
    <location>
        <begin position="984"/>
        <end position="1012"/>
    </location>
</feature>
<feature type="transmembrane region" description="Helical" evidence="7">
    <location>
        <begin position="1013"/>
        <end position="1033"/>
    </location>
</feature>
<feature type="topological domain" description="Extracellular" evidence="7">
    <location>
        <begin position="1034"/>
        <end position="1041"/>
    </location>
</feature>
<feature type="transmembrane region" description="Helical" evidence="7">
    <location>
        <begin position="1042"/>
        <end position="1062"/>
    </location>
</feature>
<feature type="topological domain" description="Cytoplasmic" evidence="7">
    <location>
        <begin position="1063"/>
        <end position="1066"/>
    </location>
</feature>
<feature type="transmembrane region" description="Helical" evidence="7">
    <location>
        <begin position="1067"/>
        <end position="1087"/>
    </location>
</feature>
<feature type="topological domain" description="Extracellular" evidence="7">
    <location>
        <begin position="1088"/>
        <end position="1098"/>
    </location>
</feature>
<feature type="transmembrane region" description="Helical" evidence="7">
    <location>
        <begin position="1099"/>
        <end position="1119"/>
    </location>
</feature>
<feature type="topological domain" description="Cytoplasmic" evidence="7">
    <location>
        <begin position="1120"/>
        <end position="1136"/>
    </location>
</feature>
<feature type="region of interest" description="Disordered" evidence="8">
    <location>
        <begin position="514"/>
        <end position="538"/>
    </location>
</feature>
<feature type="active site" description="4-aspartylphosphate intermediate" evidence="4">
    <location>
        <position position="469"/>
    </location>
</feature>
<feature type="binding site" evidence="6">
    <location>
        <position position="469"/>
    </location>
    <ligand>
        <name>ATP</name>
        <dbReference type="ChEBI" id="CHEBI:30616"/>
    </ligand>
</feature>
<feature type="binding site" evidence="6">
    <location>
        <position position="469"/>
    </location>
    <ligand>
        <name>Mg(2+)</name>
        <dbReference type="ChEBI" id="CHEBI:18420"/>
    </ligand>
</feature>
<feature type="binding site" evidence="6">
    <location>
        <position position="470"/>
    </location>
    <ligand>
        <name>ATP</name>
        <dbReference type="ChEBI" id="CHEBI:30616"/>
    </ligand>
</feature>
<feature type="binding site" evidence="4">
    <location>
        <position position="471"/>
    </location>
    <ligand>
        <name>ATP</name>
        <dbReference type="ChEBI" id="CHEBI:30616"/>
    </ligand>
</feature>
<feature type="binding site" evidence="6">
    <location>
        <position position="471"/>
    </location>
    <ligand>
        <name>Mg(2+)</name>
        <dbReference type="ChEBI" id="CHEBI:18420"/>
    </ligand>
</feature>
<feature type="binding site" evidence="2">
    <location>
        <position position="591"/>
    </location>
    <ligand>
        <name>ATP</name>
        <dbReference type="ChEBI" id="CHEBI:30616"/>
    </ligand>
</feature>
<feature type="binding site" evidence="6">
    <location>
        <position position="633"/>
    </location>
    <ligand>
        <name>ATP</name>
        <dbReference type="ChEBI" id="CHEBI:30616"/>
    </ligand>
</feature>
<feature type="binding site" evidence="4">
    <location>
        <position position="638"/>
    </location>
    <ligand>
        <name>ATP</name>
        <dbReference type="ChEBI" id="CHEBI:30616"/>
    </ligand>
</feature>
<feature type="binding site" evidence="2">
    <location>
        <position position="657"/>
    </location>
    <ligand>
        <name>ATP</name>
        <dbReference type="ChEBI" id="CHEBI:30616"/>
    </ligand>
</feature>
<feature type="binding site" evidence="2">
    <location>
        <position position="686"/>
    </location>
    <ligand>
        <name>ATP</name>
        <dbReference type="ChEBI" id="CHEBI:30616"/>
    </ligand>
</feature>
<feature type="binding site" evidence="3">
    <location>
        <position position="687"/>
    </location>
    <ligand>
        <name>ATP</name>
        <dbReference type="ChEBI" id="CHEBI:30616"/>
    </ligand>
</feature>
<feature type="binding site" evidence="2">
    <location>
        <position position="766"/>
    </location>
    <ligand>
        <name>ATP</name>
        <dbReference type="ChEBI" id="CHEBI:30616"/>
    </ligand>
</feature>
<feature type="binding site" evidence="2">
    <location>
        <position position="767"/>
    </location>
    <ligand>
        <name>ATP</name>
        <dbReference type="ChEBI" id="CHEBI:30616"/>
    </ligand>
</feature>
<feature type="binding site" evidence="2">
    <location>
        <position position="768"/>
    </location>
    <ligand>
        <name>ATP</name>
        <dbReference type="ChEBI" id="CHEBI:30616"/>
    </ligand>
</feature>
<feature type="binding site" evidence="2">
    <location>
        <position position="848"/>
    </location>
    <ligand>
        <name>ATP</name>
        <dbReference type="ChEBI" id="CHEBI:30616"/>
    </ligand>
</feature>
<feature type="binding site" evidence="2">
    <location>
        <position position="854"/>
    </location>
    <ligand>
        <name>ATP</name>
        <dbReference type="ChEBI" id="CHEBI:30616"/>
    </ligand>
</feature>
<feature type="binding site" evidence="6">
    <location>
        <position position="874"/>
    </location>
    <ligand>
        <name>Mg(2+)</name>
        <dbReference type="ChEBI" id="CHEBI:18420"/>
    </ligand>
</feature>
<feature type="binding site" evidence="6">
    <location>
        <position position="877"/>
    </location>
    <ligand>
        <name>ATP</name>
        <dbReference type="ChEBI" id="CHEBI:30616"/>
    </ligand>
</feature>
<feature type="binding site" evidence="2">
    <location>
        <position position="878"/>
    </location>
    <ligand>
        <name>ATP</name>
        <dbReference type="ChEBI" id="CHEBI:30616"/>
    </ligand>
</feature>
<feature type="binding site" evidence="5">
    <location>
        <position position="878"/>
    </location>
    <ligand>
        <name>Mg(2+)</name>
        <dbReference type="ChEBI" id="CHEBI:18420"/>
    </ligand>
</feature>
<evidence type="ECO:0000250" key="1"/>
<evidence type="ECO:0000250" key="2">
    <source>
        <dbReference type="UniProtKB" id="P04191"/>
    </source>
</evidence>
<evidence type="ECO:0000250" key="3">
    <source>
        <dbReference type="UniProtKB" id="P39524"/>
    </source>
</evidence>
<evidence type="ECO:0000250" key="4">
    <source>
        <dbReference type="UniProtKB" id="P40527"/>
    </source>
</evidence>
<evidence type="ECO:0000250" key="5">
    <source>
        <dbReference type="UniProtKB" id="Q8NB49"/>
    </source>
</evidence>
<evidence type="ECO:0000250" key="6">
    <source>
        <dbReference type="UniProtKB" id="Q9Y2Q0"/>
    </source>
</evidence>
<evidence type="ECO:0000255" key="7"/>
<evidence type="ECO:0000256" key="8">
    <source>
        <dbReference type="SAM" id="MobiDB-lite"/>
    </source>
</evidence>
<evidence type="ECO:0000305" key="9"/>
<keyword id="KW-0067">ATP-binding</keyword>
<keyword id="KW-0333">Golgi apparatus</keyword>
<keyword id="KW-0445">Lipid transport</keyword>
<keyword id="KW-0460">Magnesium</keyword>
<keyword id="KW-0472">Membrane</keyword>
<keyword id="KW-0479">Metal-binding</keyword>
<keyword id="KW-0547">Nucleotide-binding</keyword>
<keyword id="KW-1185">Reference proteome</keyword>
<keyword id="KW-1278">Translocase</keyword>
<keyword id="KW-0812">Transmembrane</keyword>
<keyword id="KW-1133">Transmembrane helix</keyword>
<keyword id="KW-0813">Transport</keyword>